<evidence type="ECO:0000269" key="1">
    <source>
    </source>
</evidence>
<evidence type="ECO:0000269" key="2">
    <source>
    </source>
</evidence>
<evidence type="ECO:0000269" key="3">
    <source>
    </source>
</evidence>
<evidence type="ECO:0000269" key="4">
    <source>
    </source>
</evidence>
<evidence type="ECO:0000269" key="5">
    <source>
    </source>
</evidence>
<evidence type="ECO:0000269" key="6">
    <source>
    </source>
</evidence>
<evidence type="ECO:0000269" key="7">
    <source>
    </source>
</evidence>
<evidence type="ECO:0000269" key="8">
    <source>
    </source>
</evidence>
<evidence type="ECO:0000269" key="9">
    <source>
    </source>
</evidence>
<evidence type="ECO:0000269" key="10">
    <source>
    </source>
</evidence>
<evidence type="ECO:0000269" key="11">
    <source>
    </source>
</evidence>
<evidence type="ECO:0000303" key="12">
    <source>
    </source>
</evidence>
<evidence type="ECO:0000303" key="13">
    <source>
    </source>
</evidence>
<evidence type="ECO:0000303" key="14">
    <source>
    </source>
</evidence>
<evidence type="ECO:0000305" key="15"/>
<evidence type="ECO:0000305" key="16">
    <source>
    </source>
</evidence>
<evidence type="ECO:0000312" key="17">
    <source>
        <dbReference type="HGNC" id="HGNC:21042"/>
    </source>
</evidence>
<evidence type="ECO:0007744" key="18">
    <source>
        <dbReference type="PDB" id="6Z1N"/>
    </source>
</evidence>
<evidence type="ECO:0007744" key="19">
    <source>
        <dbReference type="PDB" id="7PAX"/>
    </source>
</evidence>
<evidence type="ECO:0007744" key="20">
    <source>
        <dbReference type="PDB" id="7PAY"/>
    </source>
</evidence>
<evidence type="ECO:0007744" key="21">
    <source>
        <dbReference type="PDB" id="7PB0"/>
    </source>
</evidence>
<evidence type="ECO:0007744" key="22">
    <source>
        <dbReference type="PDB" id="7PB1"/>
    </source>
</evidence>
<evidence type="ECO:0007829" key="23">
    <source>
        <dbReference type="PDB" id="7PAX"/>
    </source>
</evidence>
<accession>Q96E22</accession>
<accession>B2RWQ4</accession>
<accession>O00251</accession>
<proteinExistence type="evidence at protein level"/>
<sequence>MTGLYELVWRVLHALLCLHRTLTSWLRVRFGTWNWIWRRCCRAASAAVLAPLGFTLRKPPAVGRNRRHHRHPRGGSCLAAAHHRMRWRADGRSLEKLPVHMGLVITEVEQEPSFSDIASLVVWCMAVGISYISVYDHQGIFKRNNSRLMDEILKQQQELLGLDCSKYSPEFANSNDKDDQVLNCHLAVKVLSPEDGKADIVRAAQDFCQLVAQKQKRPTDLDVDTLASLLSSNGCPDPDLVLKFGPVDSTLGFLPWHIRLTEIVSLPSHLNISYEDFFSALRQYAACEQRLGK</sequence>
<organism>
    <name type="scientific">Homo sapiens</name>
    <name type="common">Human</name>
    <dbReference type="NCBI Taxonomy" id="9606"/>
    <lineage>
        <taxon>Eukaryota</taxon>
        <taxon>Metazoa</taxon>
        <taxon>Chordata</taxon>
        <taxon>Craniata</taxon>
        <taxon>Vertebrata</taxon>
        <taxon>Euteleostomi</taxon>
        <taxon>Mammalia</taxon>
        <taxon>Eutheria</taxon>
        <taxon>Euarchontoglires</taxon>
        <taxon>Primates</taxon>
        <taxon>Haplorrhini</taxon>
        <taxon>Catarrhini</taxon>
        <taxon>Hominidae</taxon>
        <taxon>Homo</taxon>
    </lineage>
</organism>
<keyword id="KW-0002">3D-structure</keyword>
<keyword id="KW-0037">Angiogenesis</keyword>
<keyword id="KW-0900">Congenital disorder of glycosylation</keyword>
<keyword id="KW-0217">Developmental protein</keyword>
<keyword id="KW-0221">Differentiation</keyword>
<keyword id="KW-0225">Disease variant</keyword>
<keyword id="KW-0256">Endoplasmic reticulum</keyword>
<keyword id="KW-0325">Glycoprotein</keyword>
<keyword id="KW-0991">Intellectual disability</keyword>
<keyword id="KW-0443">Lipid metabolism</keyword>
<keyword id="KW-0460">Magnesium</keyword>
<keyword id="KW-0472">Membrane</keyword>
<keyword id="KW-0479">Metal-binding</keyword>
<keyword id="KW-1267">Proteomics identification</keyword>
<keyword id="KW-0675">Receptor</keyword>
<keyword id="KW-1185">Reference proteome</keyword>
<keyword id="KW-0808">Transferase</keyword>
<keyword id="KW-0812">Transmembrane</keyword>
<keyword id="KW-1133">Transmembrane helix</keyword>
<protein>
    <recommendedName>
        <fullName evidence="15">Dehydrodolichyl diphosphate synthase complex subunit NUS1</fullName>
        <ecNumber evidence="4 5">2.5.1.87</ecNumber>
    </recommendedName>
    <alternativeName>
        <fullName evidence="14">Cis-prenyltransferase subunit NgBR</fullName>
    </alternativeName>
    <alternativeName>
        <fullName evidence="12">Nogo-B receptor</fullName>
        <shortName evidence="12 14">NgBR</shortName>
    </alternativeName>
    <alternativeName>
        <fullName evidence="15">Nuclear undecaprenyl pyrophosphate synthase 1 homolog</fullName>
    </alternativeName>
</protein>
<name>NGBR_HUMAN</name>
<gene>
    <name evidence="14 17" type="primary">NUS1</name>
    <name type="synonym">C6orf68</name>
    <name type="synonym">NGBR</name>
</gene>
<dbReference type="EC" id="2.5.1.87" evidence="4 5"/>
<dbReference type="EMBL" id="Z98172">
    <property type="status" value="NOT_ANNOTATED_CDS"/>
    <property type="molecule type" value="Genomic_DNA"/>
</dbReference>
<dbReference type="EMBL" id="AL590303">
    <property type="status" value="NOT_ANNOTATED_CDS"/>
    <property type="molecule type" value="Genomic_DNA"/>
</dbReference>
<dbReference type="EMBL" id="CH471051">
    <property type="protein sequence ID" value="EAW48201.1"/>
    <property type="molecule type" value="Genomic_DNA"/>
</dbReference>
<dbReference type="EMBL" id="BC013026">
    <property type="protein sequence ID" value="AAH13026.1"/>
    <property type="molecule type" value="mRNA"/>
</dbReference>
<dbReference type="EMBL" id="BC063794">
    <property type="protein sequence ID" value="AAH63794.1"/>
    <property type="molecule type" value="mRNA"/>
</dbReference>
<dbReference type="EMBL" id="BC066910">
    <property type="protein sequence ID" value="AAH66910.1"/>
    <property type="molecule type" value="mRNA"/>
</dbReference>
<dbReference type="EMBL" id="BC110325">
    <property type="protein sequence ID" value="AAI10326.1"/>
    <property type="molecule type" value="mRNA"/>
</dbReference>
<dbReference type="EMBL" id="BC150654">
    <property type="protein sequence ID" value="AAI50655.1"/>
    <property type="molecule type" value="mRNA"/>
</dbReference>
<dbReference type="EMBL" id="BC150655">
    <property type="protein sequence ID" value="AAI50656.1"/>
    <property type="molecule type" value="mRNA"/>
</dbReference>
<dbReference type="EMBL" id="U82319">
    <property type="protein sequence ID" value="AAB72234.1"/>
    <property type="status" value="ALT_FRAME"/>
    <property type="molecule type" value="mRNA"/>
</dbReference>
<dbReference type="CCDS" id="CCDS5118.1"/>
<dbReference type="RefSeq" id="NP_612468.1">
    <property type="nucleotide sequence ID" value="NM_138459.5"/>
</dbReference>
<dbReference type="PDB" id="6W2L">
    <property type="method" value="X-ray"/>
    <property type="resolution" value="2.31 A"/>
    <property type="chains" value="B=80-293"/>
</dbReference>
<dbReference type="PDB" id="6Z1N">
    <property type="method" value="X-ray"/>
    <property type="resolution" value="2.30 A"/>
    <property type="chains" value="B=73-293"/>
</dbReference>
<dbReference type="PDB" id="7PAX">
    <property type="method" value="X-ray"/>
    <property type="resolution" value="2.00 A"/>
    <property type="chains" value="B=73-293"/>
</dbReference>
<dbReference type="PDB" id="7PAY">
    <property type="method" value="X-ray"/>
    <property type="resolution" value="2.40 A"/>
    <property type="chains" value="B=73-293"/>
</dbReference>
<dbReference type="PDB" id="7PB0">
    <property type="method" value="X-ray"/>
    <property type="resolution" value="2.30 A"/>
    <property type="chains" value="B=73-293"/>
</dbReference>
<dbReference type="PDB" id="7PB1">
    <property type="method" value="X-ray"/>
    <property type="resolution" value="2.59 A"/>
    <property type="chains" value="B=73-293"/>
</dbReference>
<dbReference type="PDBsum" id="6W2L"/>
<dbReference type="PDBsum" id="6Z1N"/>
<dbReference type="PDBsum" id="7PAX"/>
<dbReference type="PDBsum" id="7PAY"/>
<dbReference type="PDBsum" id="7PB0"/>
<dbReference type="PDBsum" id="7PB1"/>
<dbReference type="SMR" id="Q96E22"/>
<dbReference type="BioGRID" id="125481">
    <property type="interactions" value="79"/>
</dbReference>
<dbReference type="ComplexPortal" id="CPX-6701">
    <property type="entry name" value="Dehydrodolichyl diphosphate synthase complex"/>
</dbReference>
<dbReference type="CORUM" id="Q96E22"/>
<dbReference type="DIP" id="DIP-61225N"/>
<dbReference type="FunCoup" id="Q96E22">
    <property type="interactions" value="1500"/>
</dbReference>
<dbReference type="IntAct" id="Q96E22">
    <property type="interactions" value="45"/>
</dbReference>
<dbReference type="MINT" id="Q96E22"/>
<dbReference type="STRING" id="9606.ENSP00000357480"/>
<dbReference type="GlyCosmos" id="Q96E22">
    <property type="glycosylation" value="2 sites, No reported glycans"/>
</dbReference>
<dbReference type="GlyGen" id="Q96E22">
    <property type="glycosylation" value="3 sites"/>
</dbReference>
<dbReference type="iPTMnet" id="Q96E22"/>
<dbReference type="PhosphoSitePlus" id="Q96E22"/>
<dbReference type="BioMuta" id="NUS1"/>
<dbReference type="DMDM" id="74762651"/>
<dbReference type="jPOST" id="Q96E22"/>
<dbReference type="MassIVE" id="Q96E22"/>
<dbReference type="PaxDb" id="9606-ENSP00000357480"/>
<dbReference type="PeptideAtlas" id="Q96E22"/>
<dbReference type="ProteomicsDB" id="76366"/>
<dbReference type="Pumba" id="Q96E22"/>
<dbReference type="Antibodypedia" id="32563">
    <property type="antibodies" value="110 antibodies from 21 providers"/>
</dbReference>
<dbReference type="DNASU" id="116150"/>
<dbReference type="Ensembl" id="ENST00000368494.4">
    <property type="protein sequence ID" value="ENSP00000357480.3"/>
    <property type="gene ID" value="ENSG00000153989.8"/>
</dbReference>
<dbReference type="GeneID" id="116150"/>
<dbReference type="KEGG" id="hsa:116150"/>
<dbReference type="MANE-Select" id="ENST00000368494.4">
    <property type="protein sequence ID" value="ENSP00000357480.3"/>
    <property type="RefSeq nucleotide sequence ID" value="NM_138459.5"/>
    <property type="RefSeq protein sequence ID" value="NP_612468.1"/>
</dbReference>
<dbReference type="UCSC" id="uc003pxw.4">
    <property type="organism name" value="human"/>
</dbReference>
<dbReference type="AGR" id="HGNC:21042"/>
<dbReference type="CTD" id="116150"/>
<dbReference type="DisGeNET" id="116150"/>
<dbReference type="GeneCards" id="NUS1"/>
<dbReference type="HGNC" id="HGNC:21042">
    <property type="gene designation" value="NUS1"/>
</dbReference>
<dbReference type="HPA" id="ENSG00000153989">
    <property type="expression patterns" value="Low tissue specificity"/>
</dbReference>
<dbReference type="MalaCards" id="NUS1"/>
<dbReference type="MIM" id="610463">
    <property type="type" value="gene"/>
</dbReference>
<dbReference type="MIM" id="617082">
    <property type="type" value="phenotype"/>
</dbReference>
<dbReference type="MIM" id="617831">
    <property type="type" value="phenotype"/>
</dbReference>
<dbReference type="neXtProt" id="NX_Q96E22"/>
<dbReference type="OpenTargets" id="ENSG00000153989"/>
<dbReference type="Orphanet" id="442835">
    <property type="disease" value="Non-specific early-onset epileptic encephalopathy"/>
</dbReference>
<dbReference type="PharmGKB" id="PA162398248"/>
<dbReference type="VEuPathDB" id="HostDB:ENSG00000153989"/>
<dbReference type="eggNOG" id="KOG2818">
    <property type="taxonomic scope" value="Eukaryota"/>
</dbReference>
<dbReference type="GeneTree" id="ENSGT00390000003223"/>
<dbReference type="HOGENOM" id="CLU_051870_2_1_1"/>
<dbReference type="InParanoid" id="Q96E22"/>
<dbReference type="OMA" id="AWSSCAG"/>
<dbReference type="OrthoDB" id="19639at2759"/>
<dbReference type="PAN-GO" id="Q96E22">
    <property type="GO annotations" value="4 GO annotations based on evolutionary models"/>
</dbReference>
<dbReference type="PhylomeDB" id="Q96E22"/>
<dbReference type="TreeFam" id="TF332448"/>
<dbReference type="BioCyc" id="MetaCyc:ENSG00000153989-MONOMER"/>
<dbReference type="BRENDA" id="2.5.1.87">
    <property type="organism ID" value="2681"/>
</dbReference>
<dbReference type="PathwayCommons" id="Q96E22"/>
<dbReference type="Reactome" id="R-HSA-446199">
    <property type="pathway name" value="Synthesis of Dolichyl-phosphate"/>
</dbReference>
<dbReference type="Reactome" id="R-HSA-4755609">
    <property type="pathway name" value="Defective DHDDS causes RP59"/>
</dbReference>
<dbReference type="SABIO-RK" id="Q96E22"/>
<dbReference type="SignaLink" id="Q96E22"/>
<dbReference type="UniPathway" id="UPA00378"/>
<dbReference type="BioGRID-ORCS" id="116150">
    <property type="hits" value="791 hits in 1115 CRISPR screens"/>
</dbReference>
<dbReference type="ChiTaRS" id="NUS1">
    <property type="organism name" value="human"/>
</dbReference>
<dbReference type="GenomeRNAi" id="116150"/>
<dbReference type="Pharos" id="Q96E22">
    <property type="development level" value="Tbio"/>
</dbReference>
<dbReference type="PRO" id="PR:Q96E22"/>
<dbReference type="Proteomes" id="UP000005640">
    <property type="component" value="Chromosome 6"/>
</dbReference>
<dbReference type="RNAct" id="Q96E22">
    <property type="molecule type" value="protein"/>
</dbReference>
<dbReference type="Bgee" id="ENSG00000153989">
    <property type="expression patterns" value="Expressed in endometrium and 186 other cell types or tissues"/>
</dbReference>
<dbReference type="GO" id="GO:1904423">
    <property type="term" value="C:dehydrodolichyl diphosphate synthase complex"/>
    <property type="evidence" value="ECO:0000314"/>
    <property type="project" value="UniProtKB"/>
</dbReference>
<dbReference type="GO" id="GO:0005789">
    <property type="term" value="C:endoplasmic reticulum membrane"/>
    <property type="evidence" value="ECO:0000314"/>
    <property type="project" value="MGI"/>
</dbReference>
<dbReference type="GO" id="GO:0045547">
    <property type="term" value="F:ditrans,polycis-polyprenyl diphosphate synthase [(2E,6E)-farnesyl diphosphate specific] activity"/>
    <property type="evidence" value="ECO:0000314"/>
    <property type="project" value="UniProtKB"/>
</dbReference>
<dbReference type="GO" id="GO:0046872">
    <property type="term" value="F:metal ion binding"/>
    <property type="evidence" value="ECO:0007669"/>
    <property type="project" value="UniProtKB-KW"/>
</dbReference>
<dbReference type="GO" id="GO:0001525">
    <property type="term" value="P:angiogenesis"/>
    <property type="evidence" value="ECO:0007669"/>
    <property type="project" value="UniProtKB-KW"/>
</dbReference>
<dbReference type="GO" id="GO:0030154">
    <property type="term" value="P:cell differentiation"/>
    <property type="evidence" value="ECO:0007669"/>
    <property type="project" value="UniProtKB-KW"/>
</dbReference>
<dbReference type="GO" id="GO:0042632">
    <property type="term" value="P:cholesterol homeostasis"/>
    <property type="evidence" value="ECO:0007669"/>
    <property type="project" value="Ensembl"/>
</dbReference>
<dbReference type="GO" id="GO:0019408">
    <property type="term" value="P:dolichol biosynthetic process"/>
    <property type="evidence" value="ECO:0000315"/>
    <property type="project" value="MGI"/>
</dbReference>
<dbReference type="GO" id="GO:0006489">
    <property type="term" value="P:dolichyl diphosphate biosynthetic process"/>
    <property type="evidence" value="ECO:0000314"/>
    <property type="project" value="UniProtKB"/>
</dbReference>
<dbReference type="GO" id="GO:1903589">
    <property type="term" value="P:positive regulation of blood vessel endothelial cell proliferation involved in sprouting angiogenesis"/>
    <property type="evidence" value="ECO:0000315"/>
    <property type="project" value="BHF-UCL"/>
</dbReference>
<dbReference type="GO" id="GO:0090050">
    <property type="term" value="P:positive regulation of cell migration involved in sprouting angiogenesis"/>
    <property type="evidence" value="ECO:0000315"/>
    <property type="project" value="BHF-UCL"/>
</dbReference>
<dbReference type="GO" id="GO:0006486">
    <property type="term" value="P:protein glycosylation"/>
    <property type="evidence" value="ECO:0000318"/>
    <property type="project" value="GO_Central"/>
</dbReference>
<dbReference type="GO" id="GO:0035268">
    <property type="term" value="P:protein mannosylation"/>
    <property type="evidence" value="ECO:0007669"/>
    <property type="project" value="Ensembl"/>
</dbReference>
<dbReference type="GO" id="GO:0032383">
    <property type="term" value="P:regulation of intracellular cholesterol transport"/>
    <property type="evidence" value="ECO:0000316"/>
    <property type="project" value="MGI"/>
</dbReference>
<dbReference type="GO" id="GO:0038084">
    <property type="term" value="P:vascular endothelial growth factor signaling pathway"/>
    <property type="evidence" value="ECO:0000315"/>
    <property type="project" value="BHF-UCL"/>
</dbReference>
<dbReference type="FunFam" id="3.40.1180.10:FF:000008">
    <property type="entry name" value="NUS1, dehydrodolichyl diphosphate synthase subunit"/>
    <property type="match status" value="1"/>
</dbReference>
<dbReference type="Gene3D" id="3.40.1180.10">
    <property type="entry name" value="Decaprenyl diphosphate synthase-like"/>
    <property type="match status" value="1"/>
</dbReference>
<dbReference type="InterPro" id="IPR038887">
    <property type="entry name" value="Nus1/NgBR"/>
</dbReference>
<dbReference type="InterPro" id="IPR001441">
    <property type="entry name" value="UPP_synth-like"/>
</dbReference>
<dbReference type="InterPro" id="IPR036424">
    <property type="entry name" value="UPP_synth-like_sf"/>
</dbReference>
<dbReference type="PANTHER" id="PTHR21528">
    <property type="entry name" value="DEHYDRODOLICHYL DIPHOSPHATE SYNTHASE COMPLEX SUBUNIT NUS1"/>
    <property type="match status" value="1"/>
</dbReference>
<dbReference type="PANTHER" id="PTHR21528:SF0">
    <property type="entry name" value="DEHYDRODOLICHYL DIPHOSPHATE SYNTHASE COMPLEX SUBUNIT NUS1"/>
    <property type="match status" value="1"/>
</dbReference>
<dbReference type="Pfam" id="PF01255">
    <property type="entry name" value="Prenyltransf"/>
    <property type="match status" value="1"/>
</dbReference>
<dbReference type="SUPFAM" id="SSF64005">
    <property type="entry name" value="Undecaprenyl diphosphate synthase"/>
    <property type="match status" value="1"/>
</dbReference>
<comment type="function">
    <text evidence="1 3 4 5 7 8">With DHDDS, forms the dehydrodolichyl diphosphate synthase (DDS) complex, an essential component of the dolichol monophosphate (Dol-P) biosynthetic machinery (PubMed:21572394, PubMed:25066056, PubMed:28842490, PubMed:32817466, PubMed:33077723). Both subunits contribute to enzymatic activity, i.e. condensation of multiple copies of isopentenyl pyrophosphate (IPP) to farnesyl pyrophosphate (FPP) to produce dehydrodolichyl diphosphate (Dedol-PP), a precursor of dolichol phosphate which is utilized as a sugar carrier in protein glycosylation in the endoplasmic reticulum (ER) (PubMed:21572394, PubMed:25066056, PubMed:28842490, PubMed:32817466, PubMed:33077723). Synthesizes long-chain polyprenols, mostly of C95 and C100 chain length (PubMed:32817466). Regulates the glycosylation and stability of nascent NPC2, thereby promoting trafficking of LDL-derived cholesterol (PubMed:21572394). Acts as a specific receptor for the N-terminus of Nogo-B, a neural and cardiovascular regulator (PubMed:16835300).</text>
</comment>
<comment type="catalytic activity">
    <reaction evidence="4 5 7">
        <text>n isopentenyl diphosphate + (2E,6E)-farnesyl diphosphate = a di-trans,poly-cis-polyprenyl diphosphate + n diphosphate</text>
        <dbReference type="Rhea" id="RHEA:53008"/>
        <dbReference type="Rhea" id="RHEA-COMP:19494"/>
        <dbReference type="ChEBI" id="CHEBI:33019"/>
        <dbReference type="ChEBI" id="CHEBI:128769"/>
        <dbReference type="ChEBI" id="CHEBI:136960"/>
        <dbReference type="ChEBI" id="CHEBI:175763"/>
        <dbReference type="EC" id="2.5.1.87"/>
    </reaction>
</comment>
<comment type="cofactor">
    <cofactor evidence="5">
        <name>Mg(2+)</name>
        <dbReference type="ChEBI" id="CHEBI:18420"/>
    </cofactor>
</comment>
<comment type="activity regulation">
    <text evidence="5 7">Activated by phospholipids including cardiolipin, phosphatidylcholine, phosphatidylethanolamine, phosphatidylinositol and phosphatidylserine.</text>
</comment>
<comment type="biophysicochemical properties">
    <kinetics>
        <KM evidence="5">11.1 uM for isopentenyl diphosphate</KM>
        <KM evidence="5">0.68 uM for (2E,6E)-farnesyl diphosphate</KM>
        <text evidence="5">Values were measured with the heterodimer. kcat is 0.58 sec(-1) with (2E,6E)-farnesyl diphosphate and isopentenyl diphosphate as substrates.</text>
    </kinetics>
    <phDependence>
        <text evidence="5">Optimum pH is 8-9. Active from pH 5.5 to 9.3.</text>
    </phDependence>
</comment>
<comment type="pathway">
    <text evidence="4 8">Protein modification; protein glycosylation.</text>
</comment>
<comment type="pathway">
    <text evidence="4 5">Lipid metabolism.</text>
</comment>
<comment type="subunit">
    <text evidence="2 3 4 5 7 8 10">The active dehydrodolichyl diphosphate synthase complex is a heterotetramer composed of a dimer of heterodimer of DHDDS and NUS1 (PubMed:19723497, PubMed:25066056, PubMed:28842490, PubMed:32817466, PubMed:33077723, PubMed:35584224). Interacts with NPC2 (PubMed:21572394).</text>
</comment>
<comment type="interaction">
    <interactant intactId="EBI-6949352">
        <id>Q96E22</id>
    </interactant>
    <interactant intactId="EBI-6949335">
        <id>Q9H7T3</id>
        <label>C10orf95</label>
    </interactant>
    <organismsDiffer>false</organismsDiffer>
    <experiments>3</experiments>
</comment>
<comment type="interaction">
    <interactant intactId="EBI-6949352">
        <id>Q96E22</id>
    </interactant>
    <interactant intactId="EBI-26942900">
        <id>Q86SQ9</id>
        <label>DHDDS</label>
    </interactant>
    <organismsDiffer>false</organismsDiffer>
    <experiments>6</experiments>
</comment>
<comment type="subcellular location">
    <subcellularLocation>
        <location evidence="2 3">Endoplasmic reticulum membrane</location>
        <topology evidence="13">Multi-pass membrane protein</topology>
    </subcellularLocation>
    <text evidence="2">Colocalizes with Nogo-B during VEGF and wound healing angiogenesis.</text>
</comment>
<comment type="domain">
    <text evidence="7">Contains the RXG motif, which is important for substrate binding and prenyltransferase activity. The catalytic site at NUS1-DHDDS interface accomodates both the allylic and the homoallylic IPP substrates to the S1 and S2 pockets respectively. The beta-phosphate groups of IPP substrates form hydrogen bonds with the RXG motif of NUS1 and four conserved residues of DHDDS ('Arg-85', 'Arg-205', 'Arg-211' and 'Ser-213'), while the allylic isopentenyl group is pointed toward the hydrophobic tunnel of the S1 pocket where the product elongation occurs.</text>
</comment>
<comment type="disease" evidence="4">
    <disease id="DI-04809">
        <name>Congenital disorder of glycosylation 1AA</name>
        <acronym>CDG1AA</acronym>
        <description>A form of congenital disorder of glycosylation, a multisystem disorder caused by a defect in glycoprotein biosynthesis and characterized by under-glycosylated serum glycoproteins. Congenital disorders of glycosylation result in a wide variety of clinical features, such as defects in the nervous system development, psychomotor retardation, dysmorphic features, hypotonia, coagulation disorders, and immunodeficiency. The broad spectrum of features reflects the critical role of N-glycoproteins during embryonic development, differentiation, and maintenance of cell functions. CDG1AA inheritance is autosomal recessive.</description>
        <dbReference type="MIM" id="617082"/>
    </disease>
    <text>The disease is caused by variants affecting the gene represented in this entry.</text>
</comment>
<comment type="disease" evidence="6">
    <disease id="DI-05178">
        <name>Intellectual developmental disorder, autosomal dominant 55, with seizures</name>
        <acronym>MRD55</acronym>
        <description>A form of intellectual disability, a disorder characterized by significantly below average general intellectual functioning associated with impairments in adaptive behavior and manifested during the developmental period. MRD55 patients suffer from seizures appearing during the first years of life.</description>
        <dbReference type="MIM" id="617831"/>
    </disease>
    <text>The disease is caused by variants affecting the gene represented in this entry.</text>
</comment>
<comment type="miscellaneous">
    <text evidence="13">NUS1 seems to exist in two topological orientations, a minor glycosylated species with its C-terminus oriented towards the lumen regulating NPC2 stability, and a major fraction oriented with its C-terminus directed towards the cytosol where it regulates cis-IPTase activity.</text>
</comment>
<comment type="similarity">
    <text evidence="15">Belongs to the UPP synthase family.</text>
</comment>
<comment type="sequence caution" evidence="15">
    <conflict type="frameshift">
        <sequence resource="EMBL-CDS" id="AAB72234"/>
    </conflict>
</comment>
<feature type="chain" id="PRO_0000273167" description="Dehydrodolichyl diphosphate synthase complex subunit NUS1">
    <location>
        <begin position="1"/>
        <end position="293"/>
    </location>
</feature>
<feature type="transmembrane region" description="Helical; Name=1" evidence="13">
    <location>
        <begin position="1"/>
        <end position="23"/>
    </location>
</feature>
<feature type="transmembrane region" description="Helical; Name=2" evidence="13">
    <location>
        <begin position="35"/>
        <end position="56"/>
    </location>
</feature>
<feature type="transmembrane region" description="Helical; Name=3" evidence="13">
    <location>
        <begin position="117"/>
        <end position="135"/>
    </location>
</feature>
<feature type="short sequence motif" description="RXG motif; crucial for prenyltransferase activity" evidence="7 16">
    <location>
        <begin position="290"/>
        <end position="292"/>
    </location>
</feature>
<feature type="binding site" evidence="7">
    <location>
        <position position="291"/>
    </location>
    <ligand>
        <name>isopentenyl diphosphate</name>
        <dbReference type="ChEBI" id="CHEBI:128769"/>
    </ligand>
</feature>
<feature type="binding site" evidence="7">
    <location>
        <position position="292"/>
    </location>
    <ligand>
        <name>isopentenyl diphosphate</name>
        <dbReference type="ChEBI" id="CHEBI:128769"/>
    </ligand>
</feature>
<feature type="glycosylation site" description="N-linked (GlcNAc...) asparagine" evidence="3">
    <location>
        <position position="144"/>
    </location>
</feature>
<feature type="glycosylation site" description="N-linked (GlcNAc...) asparagine" evidence="3">
    <location>
        <position position="271"/>
    </location>
</feature>
<feature type="sequence variant" id="VAR_083900" description="Found in a patient with Parkinson's disease; likely pathogenic; 40 % reduction in prenyltransferase activity." evidence="7">
    <original>G</original>
    <variation>C</variation>
    <location>
        <position position="91"/>
    </location>
</feature>
<feature type="sequence variant" id="VAR_085036" description="Found in a patient with progressive myoclonus epilepsy; likely pathogenic." evidence="9">
    <location>
        <begin position="104"/>
        <end position="293"/>
    </location>
</feature>
<feature type="sequence variant" id="VAR_030092" description="In dbSNP:rs28362518.">
    <original>N</original>
    <variation>Y</variation>
    <location>
        <position position="175"/>
    </location>
</feature>
<feature type="sequence variant" id="VAR_030093" description="In dbSNP:rs28362519.">
    <original>D</original>
    <variation>E</variation>
    <location>
        <position position="179"/>
    </location>
</feature>
<feature type="sequence variant" id="VAR_030094" description="In dbSNP:rs1052237.">
    <location>
        <position position="210"/>
    </location>
</feature>
<feature type="sequence variant" id="VAR_030095" description="In dbSNP:rs1052239." evidence="11">
    <original>K</original>
    <variation>R</variation>
    <location>
        <position position="216"/>
    </location>
</feature>
<feature type="sequence variant" id="VAR_030096" description="In dbSNP:rs1132147." evidence="11">
    <original>T</original>
    <variation>K</variation>
    <location>
        <position position="219"/>
    </location>
</feature>
<feature type="sequence variant" id="VAR_071210" description="In CDG1AA; loss of function in protein glycosylation; 5-fold reduction in catalytic activity and reduced affinity for FPP and IPP.; dbSNP:rs886037858." evidence="4 5 8">
    <original>R</original>
    <variation>H</variation>
    <location>
        <position position="290"/>
    </location>
</feature>
<feature type="mutagenesis site" description="3.5-fold reduction in catalytic activity and no marked change in affinity for FPP and IPP." evidence="5">
    <original>H</original>
    <variation>A</variation>
    <location>
        <position position="100"/>
    </location>
</feature>
<feature type="mutagenesis site" description="Decreases binding to DHDDS." evidence="7">
    <original>G</original>
    <variation>A</variation>
    <location>
        <position position="196"/>
    </location>
</feature>
<feature type="mutagenesis site" description="Decreases binding to DHDDS." evidence="7">
    <original>K</original>
    <variation>A</variation>
    <location>
        <position position="197"/>
    </location>
</feature>
<feature type="mutagenesis site" description="Disrupts NUS1-DHDDS heterodimerization." evidence="7">
    <original>I</original>
    <variation>A</variation>
    <location>
        <position position="200"/>
    </location>
</feature>
<feature type="mutagenesis site" description="Disrupts NUS1-DHDDS heterodimerization." evidence="7">
    <original>L</original>
    <variation>A</variation>
    <location>
        <position position="226"/>
    </location>
</feature>
<feature type="mutagenesis site" description="Disrupts NUS1-DHDDS heterodimerization." evidence="7">
    <original>L</original>
    <variation>A</variation>
    <location>
        <position position="230"/>
    </location>
</feature>
<feature type="mutagenesis site" description="Disrupts NUS1-DHDDS heterodimerization." evidence="7">
    <original>G</original>
    <variation>A</variation>
    <location>
        <position position="252"/>
    </location>
</feature>
<feature type="mutagenesis site" description="Disrupts NUS1-DHDDS heterodimerization." evidence="7">
    <original>F</original>
    <variation>A</variation>
    <location>
        <position position="253"/>
    </location>
</feature>
<feature type="mutagenesis site" description="Disrupts NUS1-DHDDS heterodimerization." evidence="7">
    <original>P</original>
    <variation>A</variation>
    <location>
        <position position="255"/>
    </location>
</feature>
<feature type="mutagenesis site" description="Almost complete loss of catalytic activity." evidence="5">
    <original>G</original>
    <variation>A</variation>
    <location>
        <position position="292"/>
    </location>
</feature>
<feature type="mutagenesis site" description="Almost complete loss of catalytic activity." evidence="5">
    <original>K</original>
    <variation>KA</variation>
    <location>
        <position position="293"/>
    </location>
</feature>
<feature type="mutagenesis site" description="Almost complete loss of catalytic activity." evidence="5">
    <location>
        <position position="293"/>
    </location>
</feature>
<feature type="helix" evidence="23">
    <location>
        <begin position="79"/>
        <end position="93"/>
    </location>
</feature>
<feature type="strand" evidence="23">
    <location>
        <begin position="99"/>
        <end position="106"/>
    </location>
</feature>
<feature type="helix" evidence="23">
    <location>
        <begin position="114"/>
        <end position="127"/>
    </location>
</feature>
<feature type="strand" evidence="23">
    <location>
        <begin position="131"/>
        <end position="136"/>
    </location>
</feature>
<feature type="helix" evidence="23">
    <location>
        <begin position="142"/>
        <end position="144"/>
    </location>
</feature>
<feature type="helix" evidence="23">
    <location>
        <begin position="145"/>
        <end position="157"/>
    </location>
</feature>
<feature type="helix" evidence="23">
    <location>
        <begin position="177"/>
        <end position="187"/>
    </location>
</feature>
<feature type="strand" evidence="23">
    <location>
        <begin position="188"/>
        <end position="191"/>
    </location>
</feature>
<feature type="helix" evidence="23">
    <location>
        <begin position="193"/>
        <end position="195"/>
    </location>
</feature>
<feature type="helix" evidence="23">
    <location>
        <begin position="197"/>
        <end position="212"/>
    </location>
</feature>
<feature type="helix" evidence="23">
    <location>
        <begin position="218"/>
        <end position="220"/>
    </location>
</feature>
<feature type="helix" evidence="23">
    <location>
        <begin position="223"/>
        <end position="229"/>
    </location>
</feature>
<feature type="turn" evidence="23">
    <location>
        <begin position="231"/>
        <end position="234"/>
    </location>
</feature>
<feature type="strand" evidence="23">
    <location>
        <begin position="239"/>
        <end position="246"/>
    </location>
</feature>
<feature type="helix" evidence="23">
    <location>
        <begin position="256"/>
        <end position="258"/>
    </location>
</feature>
<feature type="strand" evidence="23">
    <location>
        <begin position="262"/>
        <end position="267"/>
    </location>
</feature>
<feature type="helix" evidence="23">
    <location>
        <begin position="274"/>
        <end position="286"/>
    </location>
</feature>
<reference key="1">
    <citation type="journal article" date="2003" name="Nature">
        <title>The DNA sequence and analysis of human chromosome 6.</title>
        <authorList>
            <person name="Mungall A.J."/>
            <person name="Palmer S.A."/>
            <person name="Sims S.K."/>
            <person name="Edwards C.A."/>
            <person name="Ashurst J.L."/>
            <person name="Wilming L."/>
            <person name="Jones M.C."/>
            <person name="Horton R."/>
            <person name="Hunt S.E."/>
            <person name="Scott C.E."/>
            <person name="Gilbert J.G.R."/>
            <person name="Clamp M.E."/>
            <person name="Bethel G."/>
            <person name="Milne S."/>
            <person name="Ainscough R."/>
            <person name="Almeida J.P."/>
            <person name="Ambrose K.D."/>
            <person name="Andrews T.D."/>
            <person name="Ashwell R.I.S."/>
            <person name="Babbage A.K."/>
            <person name="Bagguley C.L."/>
            <person name="Bailey J."/>
            <person name="Banerjee R."/>
            <person name="Barker D.J."/>
            <person name="Barlow K.F."/>
            <person name="Bates K."/>
            <person name="Beare D.M."/>
            <person name="Beasley H."/>
            <person name="Beasley O."/>
            <person name="Bird C.P."/>
            <person name="Blakey S.E."/>
            <person name="Bray-Allen S."/>
            <person name="Brook J."/>
            <person name="Brown A.J."/>
            <person name="Brown J.Y."/>
            <person name="Burford D.C."/>
            <person name="Burrill W."/>
            <person name="Burton J."/>
            <person name="Carder C."/>
            <person name="Carter N.P."/>
            <person name="Chapman J.C."/>
            <person name="Clark S.Y."/>
            <person name="Clark G."/>
            <person name="Clee C.M."/>
            <person name="Clegg S."/>
            <person name="Cobley V."/>
            <person name="Collier R.E."/>
            <person name="Collins J.E."/>
            <person name="Colman L.K."/>
            <person name="Corby N.R."/>
            <person name="Coville G.J."/>
            <person name="Culley K.M."/>
            <person name="Dhami P."/>
            <person name="Davies J."/>
            <person name="Dunn M."/>
            <person name="Earthrowl M.E."/>
            <person name="Ellington A.E."/>
            <person name="Evans K.A."/>
            <person name="Faulkner L."/>
            <person name="Francis M.D."/>
            <person name="Frankish A."/>
            <person name="Frankland J."/>
            <person name="French L."/>
            <person name="Garner P."/>
            <person name="Garnett J."/>
            <person name="Ghori M.J."/>
            <person name="Gilby L.M."/>
            <person name="Gillson C.J."/>
            <person name="Glithero R.J."/>
            <person name="Grafham D.V."/>
            <person name="Grant M."/>
            <person name="Gribble S."/>
            <person name="Griffiths C."/>
            <person name="Griffiths M.N.D."/>
            <person name="Hall R."/>
            <person name="Halls K.S."/>
            <person name="Hammond S."/>
            <person name="Harley J.L."/>
            <person name="Hart E.A."/>
            <person name="Heath P.D."/>
            <person name="Heathcott R."/>
            <person name="Holmes S.J."/>
            <person name="Howden P.J."/>
            <person name="Howe K.L."/>
            <person name="Howell G.R."/>
            <person name="Huckle E."/>
            <person name="Humphray S.J."/>
            <person name="Humphries M.D."/>
            <person name="Hunt A.R."/>
            <person name="Johnson C.M."/>
            <person name="Joy A.A."/>
            <person name="Kay M."/>
            <person name="Keenan S.J."/>
            <person name="Kimberley A.M."/>
            <person name="King A."/>
            <person name="Laird G.K."/>
            <person name="Langford C."/>
            <person name="Lawlor S."/>
            <person name="Leongamornlert D.A."/>
            <person name="Leversha M."/>
            <person name="Lloyd C.R."/>
            <person name="Lloyd D.M."/>
            <person name="Loveland J.E."/>
            <person name="Lovell J."/>
            <person name="Martin S."/>
            <person name="Mashreghi-Mohammadi M."/>
            <person name="Maslen G.L."/>
            <person name="Matthews L."/>
            <person name="McCann O.T."/>
            <person name="McLaren S.J."/>
            <person name="McLay K."/>
            <person name="McMurray A."/>
            <person name="Moore M.J.F."/>
            <person name="Mullikin J.C."/>
            <person name="Niblett D."/>
            <person name="Nickerson T."/>
            <person name="Novik K.L."/>
            <person name="Oliver K."/>
            <person name="Overton-Larty E.K."/>
            <person name="Parker A."/>
            <person name="Patel R."/>
            <person name="Pearce A.V."/>
            <person name="Peck A.I."/>
            <person name="Phillimore B.J.C.T."/>
            <person name="Phillips S."/>
            <person name="Plumb R.W."/>
            <person name="Porter K.M."/>
            <person name="Ramsey Y."/>
            <person name="Ranby S.A."/>
            <person name="Rice C.M."/>
            <person name="Ross M.T."/>
            <person name="Searle S.M."/>
            <person name="Sehra H.K."/>
            <person name="Sheridan E."/>
            <person name="Skuce C.D."/>
            <person name="Smith S."/>
            <person name="Smith M."/>
            <person name="Spraggon L."/>
            <person name="Squares S.L."/>
            <person name="Steward C.A."/>
            <person name="Sycamore N."/>
            <person name="Tamlyn-Hall G."/>
            <person name="Tester J."/>
            <person name="Theaker A.J."/>
            <person name="Thomas D.W."/>
            <person name="Thorpe A."/>
            <person name="Tracey A."/>
            <person name="Tromans A."/>
            <person name="Tubby B."/>
            <person name="Wall M."/>
            <person name="Wallis J.M."/>
            <person name="West A.P."/>
            <person name="White S.S."/>
            <person name="Whitehead S.L."/>
            <person name="Whittaker H."/>
            <person name="Wild A."/>
            <person name="Willey D.J."/>
            <person name="Wilmer T.E."/>
            <person name="Wood J.M."/>
            <person name="Wray P.W."/>
            <person name="Wyatt J.C."/>
            <person name="Young L."/>
            <person name="Younger R.M."/>
            <person name="Bentley D.R."/>
            <person name="Coulson A."/>
            <person name="Durbin R.M."/>
            <person name="Hubbard T."/>
            <person name="Sulston J.E."/>
            <person name="Dunham I."/>
            <person name="Rogers J."/>
            <person name="Beck S."/>
        </authorList>
    </citation>
    <scope>NUCLEOTIDE SEQUENCE [LARGE SCALE GENOMIC DNA]</scope>
</reference>
<reference key="2">
    <citation type="submission" date="2005-09" db="EMBL/GenBank/DDBJ databases">
        <authorList>
            <person name="Mural R.J."/>
            <person name="Istrail S."/>
            <person name="Sutton G.G."/>
            <person name="Florea L."/>
            <person name="Halpern A.L."/>
            <person name="Mobarry C.M."/>
            <person name="Lippert R."/>
            <person name="Walenz B."/>
            <person name="Shatkay H."/>
            <person name="Dew I."/>
            <person name="Miller J.R."/>
            <person name="Flanigan M.J."/>
            <person name="Edwards N.J."/>
            <person name="Bolanos R."/>
            <person name="Fasulo D."/>
            <person name="Halldorsson B.V."/>
            <person name="Hannenhalli S."/>
            <person name="Turner R."/>
            <person name="Yooseph S."/>
            <person name="Lu F."/>
            <person name="Nusskern D.R."/>
            <person name="Shue B.C."/>
            <person name="Zheng X.H."/>
            <person name="Zhong F."/>
            <person name="Delcher A.L."/>
            <person name="Huson D.H."/>
            <person name="Kravitz S.A."/>
            <person name="Mouchard L."/>
            <person name="Reinert K."/>
            <person name="Remington K.A."/>
            <person name="Clark A.G."/>
            <person name="Waterman M.S."/>
            <person name="Eichler E.E."/>
            <person name="Adams M.D."/>
            <person name="Hunkapiller M.W."/>
            <person name="Myers E.W."/>
            <person name="Venter J.C."/>
        </authorList>
    </citation>
    <scope>NUCLEOTIDE SEQUENCE [LARGE SCALE GENOMIC DNA]</scope>
</reference>
<reference key="3">
    <citation type="journal article" date="2004" name="Genome Res.">
        <title>The status, quality, and expansion of the NIH full-length cDNA project: the Mammalian Gene Collection (MGC).</title>
        <authorList>
            <consortium name="The MGC Project Team"/>
        </authorList>
    </citation>
    <scope>NUCLEOTIDE SEQUENCE [LARGE SCALE MRNA]</scope>
    <source>
        <tissue>Lymph</tissue>
        <tissue>Muscle</tissue>
        <tissue>Testis</tissue>
        <tissue>Uterus</tissue>
    </source>
</reference>
<reference key="4">
    <citation type="journal article" date="1997" name="Proc. Natl. Acad. Sci. U.S.A.">
        <title>Direct isolation of human transcribed sequences from yeast artificial chromosomes through the application of RNA fingerprinting.</title>
        <authorList>
            <person name="Still I.H."/>
            <person name="Vince P."/>
            <person name="Cowell J.K."/>
        </authorList>
    </citation>
    <scope>NUCLEOTIDE SEQUENCE [MRNA] OF 171-293</scope>
    <scope>VARIANTS ARG-216 AND LYS-219</scope>
</reference>
<reference key="5">
    <citation type="journal article" date="2006" name="Proc. Natl. Acad. Sci. U.S.A.">
        <title>Identification of a receptor necessary for Nogo-B stimulated chemotaxis and morphogenesis of endothelial cells.</title>
        <authorList>
            <person name="Miao R.Q."/>
            <person name="Gao Y."/>
            <person name="Harrison K.D."/>
            <person name="Prendergast J."/>
            <person name="Acevedo L.M."/>
            <person name="Yu J."/>
            <person name="Hu F."/>
            <person name="Strittmatter S.M."/>
            <person name="Sessa W.C."/>
        </authorList>
    </citation>
    <scope>FUNCTION</scope>
    <scope>LACK OF TRANSFERASE ACTIVITY</scope>
</reference>
<reference key="6">
    <citation type="journal article" date="2009" name="Cell Metab.">
        <title>Nogo-B receptor stabilizes Niemann-Pick type C2 protein and regulates intracellular cholesterol trafficking.</title>
        <authorList>
            <person name="Harrison K.D."/>
            <person name="Miao R.Q."/>
            <person name="Fernandez-Hernando C."/>
            <person name="Suarez Y."/>
            <person name="Davalos A."/>
            <person name="Sessa W.C."/>
        </authorList>
    </citation>
    <scope>SUBCELLULAR LOCATION</scope>
    <scope>INTERACTION WITH NPC2</scope>
</reference>
<reference key="7">
    <citation type="journal article" date="2011" name="EMBO J.">
        <title>Nogo-B receptor is necessary for cellular dolichol biosynthesis and protein N-glycosylation.</title>
        <authorList>
            <person name="Harrison K.D."/>
            <person name="Park E.J."/>
            <person name="Gao N."/>
            <person name="Kuo A."/>
            <person name="Rush J.S."/>
            <person name="Waechter C.J."/>
            <person name="Lehrman M.A."/>
            <person name="Sessa W.C."/>
        </authorList>
    </citation>
    <scope>FUNCTION IN DOLICHOL BIOSYNTHESIS</scope>
    <scope>SUBCELLULAR LOCATION</scope>
    <scope>GLYCOSYLATION AT ASN-144 AND ASN-271</scope>
    <scope>INTERACTION WITH DHDDS</scope>
</reference>
<reference key="8">
    <citation type="journal article" date="2014" name="Cell Metab.">
        <title>Mutation of Nogo-B receptor, a subunit of cis-prenyltransferase, causes a congenital disorder of glycosylation.</title>
        <authorList>
            <person name="Park E.J."/>
            <person name="Grabinska K.A."/>
            <person name="Guan Z."/>
            <person name="Stranecky V."/>
            <person name="Hartmannova H."/>
            <person name="Hodanova K."/>
            <person name="Baresova V."/>
            <person name="Sovova J."/>
            <person name="Jozsef L."/>
            <person name="Ondruskova N."/>
            <person name="Hansikova H."/>
            <person name="Honzik T."/>
            <person name="Zeman J."/>
            <person name="Hulkova H."/>
            <person name="Wen R."/>
            <person name="Kmoch S."/>
            <person name="Sessa W.C."/>
        </authorList>
    </citation>
    <scope>INVOLVEMENT IN CDG1AA</scope>
    <scope>VARIANT CDG1AA HIS-290</scope>
    <scope>CHARACTERIZATION OF VARIANT CDG1AA HIS-290</scope>
    <scope>CATALYTIC ACTIVITY</scope>
    <scope>FUNCTION</scope>
    <scope>SUBUNIT</scope>
    <scope>PATHWAY</scope>
</reference>
<reference key="9">
    <citation type="journal article" date="2017" name="J. Biol. Chem.">
        <title>A conserved C-terminal RXG motif in the NgBR subunit of cis-prenyltransferase is critical for prenyltransferase activity.</title>
        <authorList>
            <person name="Grabinska K.A."/>
            <person name="Edani B.H."/>
            <person name="Park E.J."/>
            <person name="Kraehling J.R."/>
            <person name="Sessa W.C."/>
        </authorList>
    </citation>
    <scope>CATALYTIC ACTIVITY</scope>
    <scope>FUNCTION</scope>
    <scope>BIOPHYSICOCHEMICAL PROPERTIES</scope>
    <scope>SUBUNIT</scope>
    <scope>MUTAGENESIS OF HIS-100; GLY-292 AND LYS-293</scope>
    <scope>ACTIVITY REGULATION</scope>
    <scope>CHARACTERIZATION OF VARIANT HIS-290</scope>
    <scope>PATHWAY</scope>
    <scope>COFACTOR</scope>
</reference>
<reference evidence="18" key="10">
    <citation type="journal article" date="2020" name="Nat. Commun.">
        <title>Structural basis of heterotetrameric assembly and disease mutations in the human cis-prenyltransferase complex.</title>
        <authorList>
            <person name="Bar-El M.L."/>
            <person name="Vankova P."/>
            <person name="Yeheskel A."/>
            <person name="Simhaev L."/>
            <person name="Engel H."/>
            <person name="Man P."/>
            <person name="Haitin Y."/>
            <person name="Giladi M."/>
        </authorList>
    </citation>
    <scope>X-RAY CRYSTALLOGRAPHY (2.30 ANGSTROMS) OF 79-293 IN COMPLEX WITH DHDDS</scope>
    <scope>FUNCTION</scope>
    <scope>PATHWAY</scope>
    <scope>SUBUNIT</scope>
    <scope>CHARACTERIZATION OF VARIANT HIS-290</scope>
</reference>
<reference key="11">
    <citation type="journal article" date="2020" name="Proc. Natl. Acad. Sci. U.S.A.">
        <title>Structural elucidation of the cis-prenyltransferase NgBR/DHDDS complex reveals insights in regulation of protein glycosylation.</title>
        <authorList>
            <person name="Edani B.H."/>
            <person name="Grabinska K.A."/>
            <person name="Zhang R."/>
            <person name="Park E.J."/>
            <person name="Siciliano B."/>
            <person name="Surmacz L."/>
            <person name="Ha Y."/>
            <person name="Sessa W.C."/>
        </authorList>
    </citation>
    <scope>X-RAY CRYSTALLOGRAPHY (2.31 ANGSTROMS) OF 79-293 IN COMPLEX WITH DHDDS AND ISOPENTENYL DIPHOSPHATE</scope>
    <scope>FUNCTION</scope>
    <scope>CATALYTIC ACTIVITY</scope>
    <scope>ACTIVITY REGULATION</scope>
    <scope>SUBUNIT</scope>
    <scope>DOMAIN</scope>
    <scope>MUTAGENESIS OF GLY-196; LYS-197; ILE-200; LEU-226; LEU-230; GLY-252; PHE-253 AND PRO-255</scope>
    <scope>VARIANT CYS-91</scope>
</reference>
<reference evidence="19 20 21 22" key="12">
    <citation type="journal article" date="2022" name="Sci. Adv.">
        <title>Structural basis for long-chain isoprenoid synthesis by cis-prenyltransferases.</title>
        <authorList>
            <person name="Giladi M."/>
            <person name="Lisnyansky Bar-El M."/>
            <person name="Vankova P."/>
            <person name="Ferofontov A."/>
            <person name="Melvin E."/>
            <person name="Alkaderi S."/>
            <person name="Kavan D."/>
            <person name="Redko B."/>
            <person name="Haimov E."/>
            <person name="Wiener R."/>
            <person name="Man P."/>
            <person name="Haitin Y."/>
        </authorList>
    </citation>
    <scope>X-RAY CRYSTALLOGRAPHY (2.00 ANGSTROMS) OF 79-293 IN COMPLEX WITH DHDDS</scope>
    <scope>SUBUNIT</scope>
</reference>
<reference key="13">
    <citation type="journal article" date="2017" name="Am. J. Hum. Genet.">
        <title>High rate of recurrent de novo mutations in developmental and epileptic encephalopathies.</title>
        <authorList>
            <consortium name="Deciphering Developmental Disorders Study"/>
            <person name="Hamdan F.F."/>
            <person name="Myers C.T."/>
            <person name="Cossette P."/>
            <person name="Lemay P."/>
            <person name="Spiegelman D."/>
            <person name="Laporte A.D."/>
            <person name="Nassif C."/>
            <person name="Diallo O."/>
            <person name="Monlong J."/>
            <person name="Cadieux-Dion M."/>
            <person name="Dobrzeniecka S."/>
            <person name="Meloche C."/>
            <person name="Retterer K."/>
            <person name="Cho M.T."/>
            <person name="Rosenfeld J.A."/>
            <person name="Bi W."/>
            <person name="Massicotte C."/>
            <person name="Miguet M."/>
            <person name="Brunga L."/>
            <person name="Regan B.M."/>
            <person name="Mo K."/>
            <person name="Tam C."/>
            <person name="Schneider A."/>
            <person name="Hollingsworth G."/>
            <person name="FitzPatrick D.R."/>
            <person name="Donaldson A."/>
            <person name="Canham N."/>
            <person name="Blair E."/>
            <person name="Kerr B."/>
            <person name="Fry A.E."/>
            <person name="Thomas R.H."/>
            <person name="Shelagh J."/>
            <person name="Hurst J.A."/>
            <person name="Brittain H."/>
            <person name="Blyth M."/>
            <person name="Lebel R.R."/>
            <person name="Gerkes E.H."/>
            <person name="Davis-Keppen L."/>
            <person name="Stein Q."/>
            <person name="Chung W.K."/>
            <person name="Dorison S.J."/>
            <person name="Benke P.J."/>
            <person name="Fassi E."/>
            <person name="Corsten-Janssen N."/>
            <person name="Kamsteeg E.J."/>
            <person name="Mau-Them F.T."/>
            <person name="Bruel A.L."/>
            <person name="Verloes A."/>
            <person name="Ounap K."/>
            <person name="Wojcik M.H."/>
            <person name="Albert D.V.F."/>
            <person name="Venkateswaran S."/>
            <person name="Ware T."/>
            <person name="Jones D."/>
            <person name="Liu Y.C."/>
            <person name="Mohammad S.S."/>
            <person name="Bizargity P."/>
            <person name="Bacino C.A."/>
            <person name="Leuzzi V."/>
            <person name="Martinelli S."/>
            <person name="Dallapiccola B."/>
            <person name="Tartaglia M."/>
            <person name="Blumkin L."/>
            <person name="Wierenga K.J."/>
            <person name="Purcarin G."/>
            <person name="O'Byrne J.J."/>
            <person name="Stockler S."/>
            <person name="Lehman A."/>
            <person name="Keren B."/>
            <person name="Nougues M.C."/>
            <person name="Mignot C."/>
            <person name="Auvin S."/>
            <person name="Nava C."/>
            <person name="Hiatt S.M."/>
            <person name="Bebin M."/>
            <person name="Shao Y."/>
            <person name="Scaglia F."/>
            <person name="Lalani S.R."/>
            <person name="Frye R.E."/>
            <person name="Jarjour I.T."/>
            <person name="Jacques S."/>
            <person name="Boucher R.M."/>
            <person name="Riou E."/>
            <person name="Srour M."/>
            <person name="Carmant L."/>
            <person name="Lortie A."/>
            <person name="Major P."/>
            <person name="Diadori P."/>
            <person name="Dubeau F."/>
            <person name="D'Anjou G."/>
            <person name="Bourque G."/>
            <person name="Berkovic S.F."/>
            <person name="Sadleir L.G."/>
            <person name="Campeau P.M."/>
            <person name="Kibar Z."/>
            <person name="Lafreniere R.G."/>
            <person name="Girard S.L."/>
            <person name="Mercimek-Mahmutoglu S."/>
            <person name="Boelman C."/>
            <person name="Rouleau G.A."/>
            <person name="Scheffer I.E."/>
            <person name="Mefford H.C."/>
            <person name="Andrade D.M."/>
            <person name="Rossignol E."/>
            <person name="Minassian B.A."/>
            <person name="Michaud J.L."/>
        </authorList>
    </citation>
    <scope>INVOLVEMENT IN MRD55</scope>
</reference>
<reference key="14">
    <citation type="journal article" date="2021" name="Am. J. Hum. Genet.">
        <title>Progressive myoclonus epilepsies-Residual unsolved cases have marked genetic heterogeneity including dolichol-dependent protein glycosylation pathway genes.</title>
        <authorList>
            <person name="Courage C."/>
            <person name="Oliver K.L."/>
            <person name="Park E.J."/>
            <person name="Cameron J.M."/>
            <person name="Grabinska K.A."/>
            <person name="Muona M."/>
            <person name="Canafoglia L."/>
            <person name="Gambardella A."/>
            <person name="Said E."/>
            <person name="Afawi Z."/>
            <person name="Baykan B."/>
            <person name="Brandt C."/>
            <person name="di Bonaventura C."/>
            <person name="Chew H.B."/>
            <person name="Criscuolo C."/>
            <person name="Dibbens L.M."/>
            <person name="Castellotti B."/>
            <person name="Riguzzi P."/>
            <person name="Labate A."/>
            <person name="Filla A."/>
            <person name="Giallonardo A.T."/>
            <person name="Berecki G."/>
            <person name="Jackson C.B."/>
            <person name="Joensuu T."/>
            <person name="Damiano J.A."/>
            <person name="Kivity S."/>
            <person name="Korczyn A."/>
            <person name="Palotie A."/>
            <person name="Striano P."/>
            <person name="Uccellini D."/>
            <person name="Giuliano L."/>
            <person name="Andermann E."/>
            <person name="Scheffer I.E."/>
            <person name="Michelucci R."/>
            <person name="Bahlo M."/>
            <person name="Franceschetti S."/>
            <person name="Sessa W.C."/>
            <person name="Berkovic S.F."/>
            <person name="Lehesjoki A.E."/>
        </authorList>
    </citation>
    <scope>VARIANT 104-VAL--LYS-293 DEL</scope>
</reference>